<keyword id="KW-0001">2Fe-2S</keyword>
<keyword id="KW-0004">4Fe-4S</keyword>
<keyword id="KW-0963">Cytoplasm</keyword>
<keyword id="KW-0408">Iron</keyword>
<keyword id="KW-0411">Iron-sulfur</keyword>
<keyword id="KW-0479">Metal-binding</keyword>
<keyword id="KW-0496">Mitochondrion</keyword>
<keyword id="KW-1185">Reference proteome</keyword>
<organism>
    <name type="scientific">Neosartorya fischeri (strain ATCC 1020 / DSM 3700 / CBS 544.65 / FGSC A1164 / JCM 1740 / NRRL 181 / WB 181)</name>
    <name type="common">Aspergillus fischerianus</name>
    <dbReference type="NCBI Taxonomy" id="331117"/>
    <lineage>
        <taxon>Eukaryota</taxon>
        <taxon>Fungi</taxon>
        <taxon>Dikarya</taxon>
        <taxon>Ascomycota</taxon>
        <taxon>Pezizomycotina</taxon>
        <taxon>Eurotiomycetes</taxon>
        <taxon>Eurotiomycetidae</taxon>
        <taxon>Eurotiales</taxon>
        <taxon>Aspergillaceae</taxon>
        <taxon>Aspergillus</taxon>
        <taxon>Aspergillus subgen. Fumigati</taxon>
    </lineage>
</organism>
<feature type="chain" id="PRO_0000324867" description="Fe-S cluster assembly protein dre2">
    <location>
        <begin position="1"/>
        <end position="320"/>
    </location>
</feature>
<feature type="region of interest" description="N-terminal SAM-like domain" evidence="1">
    <location>
        <begin position="1"/>
        <end position="130"/>
    </location>
</feature>
<feature type="region of interest" description="Linker" evidence="1">
    <location>
        <begin position="131"/>
        <end position="213"/>
    </location>
</feature>
<feature type="region of interest" description="Disordered" evidence="2">
    <location>
        <begin position="141"/>
        <end position="166"/>
    </location>
</feature>
<feature type="region of interest" description="Fe-S binding site A" evidence="1">
    <location>
        <begin position="222"/>
        <end position="238"/>
    </location>
</feature>
<feature type="region of interest" description="Fe-S binding site B" evidence="1">
    <location>
        <begin position="283"/>
        <end position="297"/>
    </location>
</feature>
<feature type="short sequence motif" description="Cx2C motif 1" evidence="1">
    <location>
        <begin position="283"/>
        <end position="286"/>
    </location>
</feature>
<feature type="short sequence motif" description="Cx2C motif 2" evidence="1">
    <location>
        <begin position="294"/>
        <end position="297"/>
    </location>
</feature>
<feature type="binding site" evidence="1">
    <location>
        <position position="222"/>
    </location>
    <ligand>
        <name>[2Fe-2S] cluster</name>
        <dbReference type="ChEBI" id="CHEBI:190135"/>
    </ligand>
</feature>
<feature type="binding site" evidence="1">
    <location>
        <position position="233"/>
    </location>
    <ligand>
        <name>[2Fe-2S] cluster</name>
        <dbReference type="ChEBI" id="CHEBI:190135"/>
    </ligand>
</feature>
<feature type="binding site" evidence="1">
    <location>
        <position position="236"/>
    </location>
    <ligand>
        <name>[2Fe-2S] cluster</name>
        <dbReference type="ChEBI" id="CHEBI:190135"/>
    </ligand>
</feature>
<feature type="binding site" evidence="1">
    <location>
        <position position="238"/>
    </location>
    <ligand>
        <name>[2Fe-2S] cluster</name>
        <dbReference type="ChEBI" id="CHEBI:190135"/>
    </ligand>
</feature>
<feature type="binding site" evidence="1">
    <location>
        <position position="283"/>
    </location>
    <ligand>
        <name>[4Fe-4S] cluster</name>
        <dbReference type="ChEBI" id="CHEBI:49883"/>
    </ligand>
</feature>
<feature type="binding site" evidence="1">
    <location>
        <position position="286"/>
    </location>
    <ligand>
        <name>[4Fe-4S] cluster</name>
        <dbReference type="ChEBI" id="CHEBI:49883"/>
    </ligand>
</feature>
<feature type="binding site" evidence="1">
    <location>
        <position position="294"/>
    </location>
    <ligand>
        <name>[4Fe-4S] cluster</name>
        <dbReference type="ChEBI" id="CHEBI:49883"/>
    </ligand>
</feature>
<feature type="binding site" evidence="1">
    <location>
        <position position="297"/>
    </location>
    <ligand>
        <name>[4Fe-4S] cluster</name>
        <dbReference type="ChEBI" id="CHEBI:49883"/>
    </ligand>
</feature>
<reference key="1">
    <citation type="journal article" date="2008" name="PLoS Genet.">
        <title>Genomic islands in the pathogenic filamentous fungus Aspergillus fumigatus.</title>
        <authorList>
            <person name="Fedorova N.D."/>
            <person name="Khaldi N."/>
            <person name="Joardar V.S."/>
            <person name="Maiti R."/>
            <person name="Amedeo P."/>
            <person name="Anderson M.J."/>
            <person name="Crabtree J."/>
            <person name="Silva J.C."/>
            <person name="Badger J.H."/>
            <person name="Albarraq A."/>
            <person name="Angiuoli S."/>
            <person name="Bussey H."/>
            <person name="Bowyer P."/>
            <person name="Cotty P.J."/>
            <person name="Dyer P.S."/>
            <person name="Egan A."/>
            <person name="Galens K."/>
            <person name="Fraser-Liggett C.M."/>
            <person name="Haas B.J."/>
            <person name="Inman J.M."/>
            <person name="Kent R."/>
            <person name="Lemieux S."/>
            <person name="Malavazi I."/>
            <person name="Orvis J."/>
            <person name="Roemer T."/>
            <person name="Ronning C.M."/>
            <person name="Sundaram J.P."/>
            <person name="Sutton G."/>
            <person name="Turner G."/>
            <person name="Venter J.C."/>
            <person name="White O.R."/>
            <person name="Whitty B.R."/>
            <person name="Youngman P."/>
            <person name="Wolfe K.H."/>
            <person name="Goldman G.H."/>
            <person name="Wortman J.R."/>
            <person name="Jiang B."/>
            <person name="Denning D.W."/>
            <person name="Nierman W.C."/>
        </authorList>
    </citation>
    <scope>NUCLEOTIDE SEQUENCE [LARGE SCALE GENOMIC DNA]</scope>
    <source>
        <strain>ATCC 1020 / DSM 3700 / CBS 544.65 / FGSC A1164 / JCM 1740 / NRRL 181 / WB 181</strain>
    </source>
</reference>
<proteinExistence type="inferred from homology"/>
<protein>
    <recommendedName>
        <fullName evidence="1">Fe-S cluster assembly protein dre2</fullName>
    </recommendedName>
    <alternativeName>
        <fullName evidence="1">Anamorsin homolog</fullName>
    </alternativeName>
</protein>
<evidence type="ECO:0000255" key="1">
    <source>
        <dbReference type="HAMAP-Rule" id="MF_03115"/>
    </source>
</evidence>
<evidence type="ECO:0000256" key="2">
    <source>
        <dbReference type="SAM" id="MobiDB-lite"/>
    </source>
</evidence>
<name>DRE2_NEOFI</name>
<sequence>MAKQTLLLSPPSLSSQPGKLNETLQSYNRNATDLQMLDRLALGLASLPDSTYSTIVILAGGDNSFSESLKLINRQTFNQIIGSLRRGGYIYGQDAVSGVAFDHNEAILAGLIHVGNGKYLKPDIEEMQAVPLRLGRKNDHLAGAPSLEGSAAEHPFPPEVSEGKTASGDNRVAVVGSQKFRENIVSAATMDNNEASDDELINEDNLLDDSELSAPIIQPPECRPKAGKRRRACKDCTCGLAQKLQEEDAVKRADADEQLDAMKLLHDDLAEVDFTVRGKVGSCGNCSLGDAFRCEGCPFIGLPAFQPGEEVRLLNNDVQL</sequence>
<comment type="function">
    <text evidence="1">Component of the cytosolic iron-sulfur (Fe-S) protein assembly (CIA) machinery required for the maturation of extramitochondrial Fe-S proteins. Part of an electron transfer chain functioning in an early step of cytosolic Fe-S biogenesis, facilitating the de novo assembly of a [4Fe-4S] cluster on the scaffold complex cfd1-nbp35. Electrons are transferred to dre2 from NADPH via the FAD- and FMN-containing protein tah18. Tah18-dre2 are also required for the assembly of the diferric tyrosyl radical cofactor of ribonucleotide reductase (RNR), probably by providing electrons for reduction during radical cofactor maturation in the catalytic small subunit rnr2.</text>
</comment>
<comment type="cofactor">
    <cofactor evidence="1">
        <name>[2Fe-2S] cluster</name>
        <dbReference type="ChEBI" id="CHEBI:190135"/>
    </cofactor>
</comment>
<comment type="cofactor">
    <cofactor evidence="1">
        <name>[4Fe-4S] cluster</name>
        <dbReference type="ChEBI" id="CHEBI:49883"/>
    </cofactor>
</comment>
<comment type="subunit">
    <text evidence="1">Monomer. Interacts with tah18. Interacts with mia40.</text>
</comment>
<comment type="subcellular location">
    <subcellularLocation>
        <location evidence="1">Cytoplasm</location>
    </subcellularLocation>
    <subcellularLocation>
        <location evidence="1">Mitochondrion intermembrane space</location>
    </subcellularLocation>
</comment>
<comment type="domain">
    <text evidence="1">The C-terminal domain binds 2 Fe-S clusters but is otherwise mostly in an intrinsically disordered conformation.</text>
</comment>
<comment type="domain">
    <text evidence="1">The N-terminal domain has structural similarity with S-adenosyl-L-methionine-dependent methyltransferases, but does not bind S-adenosyl-L-methionine. It is required for correct assembly of the 2 Fe-S clusters.</text>
</comment>
<comment type="domain">
    <text evidence="1">The twin Cx2C motifs are involved in the recognition by the mitochondrial mia40-erv1 disulfide relay system. The formation of 2 disulfide bonds in the Cx2C motifs through dithiol/disulfide exchange reactions effectively traps the protein in the mitochondrial intermembrane space.</text>
</comment>
<comment type="similarity">
    <text evidence="1">Belongs to the anamorsin family.</text>
</comment>
<gene>
    <name evidence="1" type="primary">dre2</name>
    <name type="ORF">NFIA_016970</name>
</gene>
<dbReference type="EMBL" id="DS027688">
    <property type="protein sequence ID" value="EAW22996.1"/>
    <property type="molecule type" value="Genomic_DNA"/>
</dbReference>
<dbReference type="RefSeq" id="XP_001264893.1">
    <property type="nucleotide sequence ID" value="XM_001264892.1"/>
</dbReference>
<dbReference type="SMR" id="A1D3K3"/>
<dbReference type="STRING" id="331117.A1D3K3"/>
<dbReference type="EnsemblFungi" id="EAW22996">
    <property type="protein sequence ID" value="EAW22996"/>
    <property type="gene ID" value="NFIA_016970"/>
</dbReference>
<dbReference type="GeneID" id="4591932"/>
<dbReference type="KEGG" id="nfi:NFIA_016970"/>
<dbReference type="VEuPathDB" id="FungiDB:NFIA_016970"/>
<dbReference type="eggNOG" id="KOG4020">
    <property type="taxonomic scope" value="Eukaryota"/>
</dbReference>
<dbReference type="HOGENOM" id="CLU_067152_1_0_1"/>
<dbReference type="OMA" id="DFVMPVT"/>
<dbReference type="OrthoDB" id="311633at2759"/>
<dbReference type="Proteomes" id="UP000006702">
    <property type="component" value="Unassembled WGS sequence"/>
</dbReference>
<dbReference type="GO" id="GO:0005758">
    <property type="term" value="C:mitochondrial intermembrane space"/>
    <property type="evidence" value="ECO:0007669"/>
    <property type="project" value="UniProtKB-SubCell"/>
</dbReference>
<dbReference type="GO" id="GO:0051537">
    <property type="term" value="F:2 iron, 2 sulfur cluster binding"/>
    <property type="evidence" value="ECO:0007669"/>
    <property type="project" value="UniProtKB-UniRule"/>
</dbReference>
<dbReference type="GO" id="GO:0051539">
    <property type="term" value="F:4 iron, 4 sulfur cluster binding"/>
    <property type="evidence" value="ECO:0007669"/>
    <property type="project" value="UniProtKB-KW"/>
</dbReference>
<dbReference type="GO" id="GO:0009055">
    <property type="term" value="F:electron transfer activity"/>
    <property type="evidence" value="ECO:0007669"/>
    <property type="project" value="UniProtKB-UniRule"/>
</dbReference>
<dbReference type="GO" id="GO:0046872">
    <property type="term" value="F:metal ion binding"/>
    <property type="evidence" value="ECO:0007669"/>
    <property type="project" value="UniProtKB-KW"/>
</dbReference>
<dbReference type="GO" id="GO:0016226">
    <property type="term" value="P:iron-sulfur cluster assembly"/>
    <property type="evidence" value="ECO:0007669"/>
    <property type="project" value="UniProtKB-UniRule"/>
</dbReference>
<dbReference type="Gene3D" id="3.40.50.11000">
    <property type="entry name" value="Fe-S cluster assembly protein Dre2, N-terminal domain"/>
    <property type="match status" value="1"/>
</dbReference>
<dbReference type="HAMAP" id="MF_03115">
    <property type="entry name" value="Anamorsin"/>
    <property type="match status" value="1"/>
</dbReference>
<dbReference type="InterPro" id="IPR007785">
    <property type="entry name" value="Anamorsin"/>
</dbReference>
<dbReference type="InterPro" id="IPR046408">
    <property type="entry name" value="CIAPIN1"/>
</dbReference>
<dbReference type="InterPro" id="IPR031838">
    <property type="entry name" value="Dre2_N"/>
</dbReference>
<dbReference type="PANTHER" id="PTHR13273">
    <property type="entry name" value="ANAMORSIN"/>
    <property type="match status" value="1"/>
</dbReference>
<dbReference type="PANTHER" id="PTHR13273:SF14">
    <property type="entry name" value="ANAMORSIN"/>
    <property type="match status" value="1"/>
</dbReference>
<dbReference type="Pfam" id="PF05093">
    <property type="entry name" value="CIAPIN1"/>
    <property type="match status" value="1"/>
</dbReference>
<dbReference type="Pfam" id="PF16803">
    <property type="entry name" value="DRE2_N"/>
    <property type="match status" value="1"/>
</dbReference>
<accession>A1D3K3</accession>